<reference key="1">
    <citation type="submission" date="1997-11" db="EMBL/GenBank/DDBJ databases">
        <authorList>
            <person name="Theimer C.A."/>
            <person name="Krisch H.M."/>
            <person name="Giedroc D.P."/>
        </authorList>
    </citation>
    <scope>NUCLEOTIDE SEQUENCE [GENOMIC DNA]</scope>
</reference>
<name>VHED_BPR08</name>
<organismHost>
    <name type="scientific">Escherichia coli</name>
    <dbReference type="NCBI Taxonomy" id="562"/>
</organismHost>
<organism>
    <name type="scientific">Enterobacteria phage RB8</name>
    <name type="common">Bacteriophage RB8</name>
    <dbReference type="NCBI Taxonomy" id="69611"/>
    <lineage>
        <taxon>Viruses</taxon>
        <taxon>Duplodnaviria</taxon>
        <taxon>Heunggongvirae</taxon>
        <taxon>Uroviricota</taxon>
        <taxon>Caudoviricetes</taxon>
        <taxon>Straboviridae</taxon>
        <taxon>Tevenvirinae</taxon>
        <taxon>Tequatrovirus</taxon>
    </lineage>
</organism>
<comment type="function">
    <text>Binds preferentially to single-stranded DNA and therefore, destabilizes double-stranded DNA. It is involved in DNA replication, repair and recombination. Binds ss-DNA as the replication fork advances and stimulates the replisome processivity and accuracy.</text>
</comment>
<comment type="subunit">
    <text evidence="1">Homodimer in the absence of DNA, monomer when binding DNA.</text>
</comment>
<comment type="miscellaneous">
    <text evidence="1">Interacts with the polymerase and the uvsX and uvsY proteins.</text>
</comment>
<accession>O21952</accession>
<dbReference type="EMBL" id="AF033325">
    <property type="protein sequence ID" value="AAB87490.1"/>
    <property type="molecule type" value="Genomic_DNA"/>
</dbReference>
<dbReference type="SMR" id="O21952"/>
<dbReference type="GO" id="GO:0003677">
    <property type="term" value="F:DNA binding"/>
    <property type="evidence" value="ECO:0007669"/>
    <property type="project" value="UniProtKB-KW"/>
</dbReference>
<dbReference type="GO" id="GO:0008270">
    <property type="term" value="F:zinc ion binding"/>
    <property type="evidence" value="ECO:0007669"/>
    <property type="project" value="UniProtKB-KW"/>
</dbReference>
<dbReference type="GO" id="GO:0006310">
    <property type="term" value="P:DNA recombination"/>
    <property type="evidence" value="ECO:0007669"/>
    <property type="project" value="UniProtKB-KW"/>
</dbReference>
<dbReference type="GO" id="GO:0006281">
    <property type="term" value="P:DNA repair"/>
    <property type="evidence" value="ECO:0007669"/>
    <property type="project" value="UniProtKB-KW"/>
</dbReference>
<dbReference type="GO" id="GO:0006260">
    <property type="term" value="P:DNA replication"/>
    <property type="evidence" value="ECO:0007669"/>
    <property type="project" value="UniProtKB-KW"/>
</dbReference>
<dbReference type="Gene3D" id="3.90.198.10">
    <property type="entry name" value="Replication Fork Single-Stranded Dna Binding Protein"/>
    <property type="match status" value="1"/>
</dbReference>
<dbReference type="InterPro" id="IPR012340">
    <property type="entry name" value="NA-bd_OB-fold"/>
</dbReference>
<dbReference type="InterPro" id="IPR044947">
    <property type="entry name" value="Phage_T4_Gp32_ssDNA-bd_sf"/>
</dbReference>
<dbReference type="SUPFAM" id="SSF50249">
    <property type="entry name" value="Nucleic acid-binding proteins"/>
    <property type="match status" value="1"/>
</dbReference>
<proteinExistence type="inferred from homology"/>
<protein>
    <recommendedName>
        <fullName>Single-stranded DNA-binding protein</fullName>
    </recommendedName>
    <alternativeName>
        <fullName>Gp32</fullName>
    </alternativeName>
    <alternativeName>
        <fullName>Helix-destabilizing protein</fullName>
    </alternativeName>
</protein>
<feature type="chain" id="PRO_0000165055" description="Single-stranded DNA-binding protein">
    <location>
        <begin position="1"/>
        <end position="48" status="greater than"/>
    </location>
</feature>
<feature type="non-terminal residue">
    <location>
        <position position="48"/>
    </location>
</feature>
<sequence>MFKRKSTAELAAQMAKLNGNKGFSSEDKGEWKLKLDNAGNGQAVIRFL</sequence>
<gene>
    <name type="primary">32</name>
    <name type="synonym">ssb</name>
</gene>
<evidence type="ECO:0000250" key="1"/>
<keyword id="KW-0227">DNA damage</keyword>
<keyword id="KW-0233">DNA recombination</keyword>
<keyword id="KW-0234">DNA repair</keyword>
<keyword id="KW-0235">DNA replication</keyword>
<keyword id="KW-0238">DNA-binding</keyword>
<keyword id="KW-0479">Metal-binding</keyword>
<keyword id="KW-0862">Zinc</keyword>
<keyword id="KW-0863">Zinc-finger</keyword>